<dbReference type="EC" id="1.6.5.2" evidence="1"/>
<dbReference type="EMBL" id="AL591688">
    <property type="protein sequence ID" value="CAC46214.1"/>
    <property type="molecule type" value="Genomic_DNA"/>
</dbReference>
<dbReference type="RefSeq" id="NP_385741.1">
    <property type="nucleotide sequence ID" value="NC_003047.1"/>
</dbReference>
<dbReference type="SMR" id="Q92PU3"/>
<dbReference type="CAZy" id="AA6">
    <property type="family name" value="Auxiliary Activities 6"/>
</dbReference>
<dbReference type="EnsemblBacteria" id="CAC46214">
    <property type="protein sequence ID" value="CAC46214"/>
    <property type="gene ID" value="SMc00943"/>
</dbReference>
<dbReference type="KEGG" id="sme:SMc00943"/>
<dbReference type="PATRIC" id="fig|266834.11.peg.3068"/>
<dbReference type="eggNOG" id="COG0655">
    <property type="taxonomic scope" value="Bacteria"/>
</dbReference>
<dbReference type="HOGENOM" id="CLU_051402_0_2_5"/>
<dbReference type="OrthoDB" id="9801479at2"/>
<dbReference type="Proteomes" id="UP000001976">
    <property type="component" value="Chromosome"/>
</dbReference>
<dbReference type="GO" id="GO:0016020">
    <property type="term" value="C:membrane"/>
    <property type="evidence" value="ECO:0007669"/>
    <property type="project" value="TreeGrafter"/>
</dbReference>
<dbReference type="GO" id="GO:0050660">
    <property type="term" value="F:flavin adenine dinucleotide binding"/>
    <property type="evidence" value="ECO:0007669"/>
    <property type="project" value="UniProtKB-UniRule"/>
</dbReference>
<dbReference type="GO" id="GO:0010181">
    <property type="term" value="F:FMN binding"/>
    <property type="evidence" value="ECO:0007669"/>
    <property type="project" value="InterPro"/>
</dbReference>
<dbReference type="GO" id="GO:0051287">
    <property type="term" value="F:NAD binding"/>
    <property type="evidence" value="ECO:0007669"/>
    <property type="project" value="UniProtKB-UniRule"/>
</dbReference>
<dbReference type="GO" id="GO:0050136">
    <property type="term" value="F:NADH:ubiquinone reductase (non-electrogenic) activity"/>
    <property type="evidence" value="ECO:0007669"/>
    <property type="project" value="RHEA"/>
</dbReference>
<dbReference type="GO" id="GO:0050661">
    <property type="term" value="F:NADP binding"/>
    <property type="evidence" value="ECO:0007669"/>
    <property type="project" value="UniProtKB-UniRule"/>
</dbReference>
<dbReference type="GO" id="GO:0008753">
    <property type="term" value="F:NADPH dehydrogenase (quinone) activity"/>
    <property type="evidence" value="ECO:0007669"/>
    <property type="project" value="RHEA"/>
</dbReference>
<dbReference type="FunFam" id="3.40.50.360:FF:000001">
    <property type="entry name" value="NAD(P)H dehydrogenase (Quinone) FQR1-like"/>
    <property type="match status" value="1"/>
</dbReference>
<dbReference type="Gene3D" id="3.40.50.360">
    <property type="match status" value="1"/>
</dbReference>
<dbReference type="HAMAP" id="MF_01017">
    <property type="entry name" value="NQOR"/>
    <property type="match status" value="1"/>
</dbReference>
<dbReference type="InterPro" id="IPR008254">
    <property type="entry name" value="Flavodoxin/NO_synth"/>
</dbReference>
<dbReference type="InterPro" id="IPR029039">
    <property type="entry name" value="Flavoprotein-like_sf"/>
</dbReference>
<dbReference type="InterPro" id="IPR010089">
    <property type="entry name" value="Flavoprotein_WrbA-like"/>
</dbReference>
<dbReference type="InterPro" id="IPR005025">
    <property type="entry name" value="FMN_Rdtase-like_dom"/>
</dbReference>
<dbReference type="InterPro" id="IPR037513">
    <property type="entry name" value="NQO"/>
</dbReference>
<dbReference type="NCBIfam" id="TIGR01755">
    <property type="entry name" value="flav_wrbA"/>
    <property type="match status" value="1"/>
</dbReference>
<dbReference type="NCBIfam" id="NF002999">
    <property type="entry name" value="PRK03767.1"/>
    <property type="match status" value="1"/>
</dbReference>
<dbReference type="PANTHER" id="PTHR30546">
    <property type="entry name" value="FLAVODOXIN-RELATED PROTEIN WRBA-RELATED"/>
    <property type="match status" value="1"/>
</dbReference>
<dbReference type="PANTHER" id="PTHR30546:SF23">
    <property type="entry name" value="FLAVOPROTEIN-LIKE PROTEIN YCP4-RELATED"/>
    <property type="match status" value="1"/>
</dbReference>
<dbReference type="Pfam" id="PF03358">
    <property type="entry name" value="FMN_red"/>
    <property type="match status" value="1"/>
</dbReference>
<dbReference type="SUPFAM" id="SSF52218">
    <property type="entry name" value="Flavoproteins"/>
    <property type="match status" value="1"/>
</dbReference>
<dbReference type="PROSITE" id="PS50902">
    <property type="entry name" value="FLAVODOXIN_LIKE"/>
    <property type="match status" value="1"/>
</dbReference>
<comment type="catalytic activity">
    <reaction evidence="1">
        <text>a quinone + NADH + H(+) = a quinol + NAD(+)</text>
        <dbReference type="Rhea" id="RHEA:46160"/>
        <dbReference type="ChEBI" id="CHEBI:15378"/>
        <dbReference type="ChEBI" id="CHEBI:24646"/>
        <dbReference type="ChEBI" id="CHEBI:57540"/>
        <dbReference type="ChEBI" id="CHEBI:57945"/>
        <dbReference type="ChEBI" id="CHEBI:132124"/>
        <dbReference type="EC" id="1.6.5.2"/>
    </reaction>
</comment>
<comment type="catalytic activity">
    <reaction evidence="1">
        <text>a quinone + NADPH + H(+) = a quinol + NADP(+)</text>
        <dbReference type="Rhea" id="RHEA:46164"/>
        <dbReference type="ChEBI" id="CHEBI:15378"/>
        <dbReference type="ChEBI" id="CHEBI:24646"/>
        <dbReference type="ChEBI" id="CHEBI:57783"/>
        <dbReference type="ChEBI" id="CHEBI:58349"/>
        <dbReference type="ChEBI" id="CHEBI:132124"/>
        <dbReference type="EC" id="1.6.5.2"/>
    </reaction>
</comment>
<comment type="cofactor">
    <cofactor evidence="1">
        <name>FMN</name>
        <dbReference type="ChEBI" id="CHEBI:58210"/>
    </cofactor>
    <text evidence="1">Binds 1 FMN per monomer.</text>
</comment>
<comment type="similarity">
    <text evidence="1">Belongs to the WrbA family.</text>
</comment>
<protein>
    <recommendedName>
        <fullName evidence="1">NAD(P)H dehydrogenase (quinone) 1</fullName>
        <ecNumber evidence="1">1.6.5.2</ecNumber>
    </recommendedName>
    <alternativeName>
        <fullName>Flavoprotein WrbA 1</fullName>
    </alternativeName>
    <alternativeName>
        <fullName evidence="1">NAD(P)H:quinone oxidoreductase 1</fullName>
        <shortName evidence="1">NQO 1</shortName>
    </alternativeName>
</protein>
<proteinExistence type="inferred from homology"/>
<sequence length="199" mass="20726">MARVLVLYYSAYGHIETMAHAVAEGARSAGAEVAVKRVPELVPEDVAKASHFKLDQPAPVATVEELADYDAIIFGAGTRYGTVASQLRNFIDQTGGLWAKGKLVGKVGSAFTSSATQHGGQESTILGLIPTMMHHGMVVVGLPYAFQGQMGVEEVKGGSPYGASTITGGDGSRQPSAVELEAARFQGAHVARIAAKLAD</sequence>
<feature type="chain" id="PRO_0000200751" description="NAD(P)H dehydrogenase (quinone) 1">
    <location>
        <begin position="1"/>
        <end position="199"/>
    </location>
</feature>
<feature type="domain" description="Flavodoxin-like" evidence="1">
    <location>
        <begin position="4"/>
        <end position="190"/>
    </location>
</feature>
<feature type="binding site" evidence="1">
    <location>
        <begin position="10"/>
        <end position="15"/>
    </location>
    <ligand>
        <name>FMN</name>
        <dbReference type="ChEBI" id="CHEBI:58210"/>
    </ligand>
</feature>
<feature type="binding site" evidence="1">
    <location>
        <position position="12"/>
    </location>
    <ligand>
        <name>NAD(+)</name>
        <dbReference type="ChEBI" id="CHEBI:57540"/>
    </ligand>
</feature>
<feature type="binding site" evidence="1">
    <location>
        <begin position="78"/>
        <end position="80"/>
    </location>
    <ligand>
        <name>FMN</name>
        <dbReference type="ChEBI" id="CHEBI:58210"/>
    </ligand>
</feature>
<feature type="binding site" evidence="1">
    <location>
        <position position="98"/>
    </location>
    <ligand>
        <name>substrate</name>
    </ligand>
</feature>
<feature type="binding site" evidence="1">
    <location>
        <begin position="113"/>
        <end position="119"/>
    </location>
    <ligand>
        <name>FMN</name>
        <dbReference type="ChEBI" id="CHEBI:58210"/>
    </ligand>
</feature>
<feature type="binding site" evidence="1">
    <location>
        <position position="134"/>
    </location>
    <ligand>
        <name>FMN</name>
        <dbReference type="ChEBI" id="CHEBI:58210"/>
    </ligand>
</feature>
<evidence type="ECO:0000255" key="1">
    <source>
        <dbReference type="HAMAP-Rule" id="MF_01017"/>
    </source>
</evidence>
<reference key="1">
    <citation type="journal article" date="2001" name="Proc. Natl. Acad. Sci. U.S.A.">
        <title>Analysis of the chromosome sequence of the legume symbiont Sinorhizobium meliloti strain 1021.</title>
        <authorList>
            <person name="Capela D."/>
            <person name="Barloy-Hubler F."/>
            <person name="Gouzy J."/>
            <person name="Bothe G."/>
            <person name="Ampe F."/>
            <person name="Batut J."/>
            <person name="Boistard P."/>
            <person name="Becker A."/>
            <person name="Boutry M."/>
            <person name="Cadieu E."/>
            <person name="Dreano S."/>
            <person name="Gloux S."/>
            <person name="Godrie T."/>
            <person name="Goffeau A."/>
            <person name="Kahn D."/>
            <person name="Kiss E."/>
            <person name="Lelaure V."/>
            <person name="Masuy D."/>
            <person name="Pohl T."/>
            <person name="Portetelle D."/>
            <person name="Puehler A."/>
            <person name="Purnelle B."/>
            <person name="Ramsperger U."/>
            <person name="Renard C."/>
            <person name="Thebault P."/>
            <person name="Vandenbol M."/>
            <person name="Weidner S."/>
            <person name="Galibert F."/>
        </authorList>
    </citation>
    <scope>NUCLEOTIDE SEQUENCE [LARGE SCALE GENOMIC DNA]</scope>
    <source>
        <strain>1021</strain>
    </source>
</reference>
<reference key="2">
    <citation type="journal article" date="2001" name="Science">
        <title>The composite genome of the legume symbiont Sinorhizobium meliloti.</title>
        <authorList>
            <person name="Galibert F."/>
            <person name="Finan T.M."/>
            <person name="Long S.R."/>
            <person name="Puehler A."/>
            <person name="Abola P."/>
            <person name="Ampe F."/>
            <person name="Barloy-Hubler F."/>
            <person name="Barnett M.J."/>
            <person name="Becker A."/>
            <person name="Boistard P."/>
            <person name="Bothe G."/>
            <person name="Boutry M."/>
            <person name="Bowser L."/>
            <person name="Buhrmester J."/>
            <person name="Cadieu E."/>
            <person name="Capela D."/>
            <person name="Chain P."/>
            <person name="Cowie A."/>
            <person name="Davis R.W."/>
            <person name="Dreano S."/>
            <person name="Federspiel N.A."/>
            <person name="Fisher R.F."/>
            <person name="Gloux S."/>
            <person name="Godrie T."/>
            <person name="Goffeau A."/>
            <person name="Golding B."/>
            <person name="Gouzy J."/>
            <person name="Gurjal M."/>
            <person name="Hernandez-Lucas I."/>
            <person name="Hong A."/>
            <person name="Huizar L."/>
            <person name="Hyman R.W."/>
            <person name="Jones T."/>
            <person name="Kahn D."/>
            <person name="Kahn M.L."/>
            <person name="Kalman S."/>
            <person name="Keating D.H."/>
            <person name="Kiss E."/>
            <person name="Komp C."/>
            <person name="Lelaure V."/>
            <person name="Masuy D."/>
            <person name="Palm C."/>
            <person name="Peck M.C."/>
            <person name="Pohl T.M."/>
            <person name="Portetelle D."/>
            <person name="Purnelle B."/>
            <person name="Ramsperger U."/>
            <person name="Surzycki R."/>
            <person name="Thebault P."/>
            <person name="Vandenbol M."/>
            <person name="Vorhoelter F.J."/>
            <person name="Weidner S."/>
            <person name="Wells D.H."/>
            <person name="Wong K."/>
            <person name="Yeh K.-C."/>
            <person name="Batut J."/>
        </authorList>
    </citation>
    <scope>NUCLEOTIDE SEQUENCE [LARGE SCALE GENOMIC DNA]</scope>
    <source>
        <strain>1021</strain>
    </source>
</reference>
<gene>
    <name type="ordered locus">R01635</name>
    <name type="ORF">SMc00943</name>
</gene>
<accession>Q92PU3</accession>
<name>NQOR1_RHIME</name>
<keyword id="KW-0285">Flavoprotein</keyword>
<keyword id="KW-0288">FMN</keyword>
<keyword id="KW-0520">NAD</keyword>
<keyword id="KW-0521">NADP</keyword>
<keyword id="KW-0547">Nucleotide-binding</keyword>
<keyword id="KW-0560">Oxidoreductase</keyword>
<keyword id="KW-1185">Reference proteome</keyword>
<organism>
    <name type="scientific">Rhizobium meliloti (strain 1021)</name>
    <name type="common">Ensifer meliloti</name>
    <name type="synonym">Sinorhizobium meliloti</name>
    <dbReference type="NCBI Taxonomy" id="266834"/>
    <lineage>
        <taxon>Bacteria</taxon>
        <taxon>Pseudomonadati</taxon>
        <taxon>Pseudomonadota</taxon>
        <taxon>Alphaproteobacteria</taxon>
        <taxon>Hyphomicrobiales</taxon>
        <taxon>Rhizobiaceae</taxon>
        <taxon>Sinorhizobium/Ensifer group</taxon>
        <taxon>Sinorhizobium</taxon>
    </lineage>
</organism>